<reference key="1">
    <citation type="journal article" date="2009" name="J. Bacteriol.">
        <title>Genome sequences of three Agrobacterium biovars help elucidate the evolution of multichromosome genomes in bacteria.</title>
        <authorList>
            <person name="Slater S.C."/>
            <person name="Goldman B.S."/>
            <person name="Goodner B."/>
            <person name="Setubal J.C."/>
            <person name="Farrand S.K."/>
            <person name="Nester E.W."/>
            <person name="Burr T.J."/>
            <person name="Banta L."/>
            <person name="Dickerman A.W."/>
            <person name="Paulsen I."/>
            <person name="Otten L."/>
            <person name="Suen G."/>
            <person name="Welch R."/>
            <person name="Almeida N.F."/>
            <person name="Arnold F."/>
            <person name="Burton O.T."/>
            <person name="Du Z."/>
            <person name="Ewing A."/>
            <person name="Godsy E."/>
            <person name="Heisel S."/>
            <person name="Houmiel K.L."/>
            <person name="Jhaveri J."/>
            <person name="Lu J."/>
            <person name="Miller N.M."/>
            <person name="Norton S."/>
            <person name="Chen Q."/>
            <person name="Phoolcharoen W."/>
            <person name="Ohlin V."/>
            <person name="Ondrusek D."/>
            <person name="Pride N."/>
            <person name="Stricklin S.L."/>
            <person name="Sun J."/>
            <person name="Wheeler C."/>
            <person name="Wilson L."/>
            <person name="Zhu H."/>
            <person name="Wood D.W."/>
        </authorList>
    </citation>
    <scope>NUCLEOTIDE SEQUENCE [LARGE SCALE GENOMIC DNA]</scope>
    <source>
        <strain>ATCC BAA-846 / DSM 112012 / S4</strain>
    </source>
</reference>
<name>PLSY_ALLAM</name>
<gene>
    <name evidence="1" type="primary">plsY</name>
    <name type="ordered locus">Avi_1760</name>
</gene>
<feature type="chain" id="PRO_1000149560" description="Glycerol-3-phosphate acyltransferase">
    <location>
        <begin position="1"/>
        <end position="209"/>
    </location>
</feature>
<feature type="transmembrane region" description="Helical" evidence="1">
    <location>
        <begin position="13"/>
        <end position="33"/>
    </location>
</feature>
<feature type="transmembrane region" description="Helical" evidence="1">
    <location>
        <begin position="63"/>
        <end position="83"/>
    </location>
</feature>
<feature type="transmembrane region" description="Helical" evidence="1">
    <location>
        <begin position="94"/>
        <end position="114"/>
    </location>
</feature>
<feature type="transmembrane region" description="Helical" evidence="1">
    <location>
        <begin position="127"/>
        <end position="147"/>
    </location>
</feature>
<feature type="transmembrane region" description="Helical" evidence="1">
    <location>
        <begin position="151"/>
        <end position="171"/>
    </location>
</feature>
<sequence>MPSLDYSQVTITALIASLAIGYLLGSIPFGLLLTRMAGLGDVRNIGSGNIGATNVLRTGNKKLAAATLLLDALKATAAALIAQKLFGSDTVHLPGLLGGFAAFIGHLFPVWLGFKGGKGVATYIGTLLGIFPLMVLVFAIVWLSIAFLSRYSSLSALVATLVIPVALWILGQPEAAMITSAMTVITWGKHKANIERLISGTESKIGKKG</sequence>
<protein>
    <recommendedName>
        <fullName evidence="1">Glycerol-3-phosphate acyltransferase</fullName>
    </recommendedName>
    <alternativeName>
        <fullName evidence="1">Acyl-PO4 G3P acyltransferase</fullName>
    </alternativeName>
    <alternativeName>
        <fullName evidence="1">Acyl-phosphate--glycerol-3-phosphate acyltransferase</fullName>
    </alternativeName>
    <alternativeName>
        <fullName evidence="1">G3P acyltransferase</fullName>
        <shortName evidence="1">GPAT</shortName>
        <ecNumber evidence="1">2.3.1.275</ecNumber>
    </alternativeName>
    <alternativeName>
        <fullName evidence="1">Lysophosphatidic acid synthase</fullName>
        <shortName evidence="1">LPA synthase</shortName>
    </alternativeName>
</protein>
<evidence type="ECO:0000255" key="1">
    <source>
        <dbReference type="HAMAP-Rule" id="MF_01043"/>
    </source>
</evidence>
<accession>B9JVI2</accession>
<organism>
    <name type="scientific">Allorhizobium ampelinum (strain ATCC BAA-846 / DSM 112012 / S4)</name>
    <name type="common">Agrobacterium vitis (strain S4)</name>
    <dbReference type="NCBI Taxonomy" id="311402"/>
    <lineage>
        <taxon>Bacteria</taxon>
        <taxon>Pseudomonadati</taxon>
        <taxon>Pseudomonadota</taxon>
        <taxon>Alphaproteobacteria</taxon>
        <taxon>Hyphomicrobiales</taxon>
        <taxon>Rhizobiaceae</taxon>
        <taxon>Rhizobium/Agrobacterium group</taxon>
        <taxon>Allorhizobium</taxon>
        <taxon>Allorhizobium ampelinum</taxon>
    </lineage>
</organism>
<keyword id="KW-0997">Cell inner membrane</keyword>
<keyword id="KW-1003">Cell membrane</keyword>
<keyword id="KW-0444">Lipid biosynthesis</keyword>
<keyword id="KW-0443">Lipid metabolism</keyword>
<keyword id="KW-0472">Membrane</keyword>
<keyword id="KW-0594">Phospholipid biosynthesis</keyword>
<keyword id="KW-1208">Phospholipid metabolism</keyword>
<keyword id="KW-1185">Reference proteome</keyword>
<keyword id="KW-0808">Transferase</keyword>
<keyword id="KW-0812">Transmembrane</keyword>
<keyword id="KW-1133">Transmembrane helix</keyword>
<dbReference type="EC" id="2.3.1.275" evidence="1"/>
<dbReference type="EMBL" id="CP000633">
    <property type="protein sequence ID" value="ACM36262.1"/>
    <property type="molecule type" value="Genomic_DNA"/>
</dbReference>
<dbReference type="RefSeq" id="WP_015915685.1">
    <property type="nucleotide sequence ID" value="NC_011989.1"/>
</dbReference>
<dbReference type="SMR" id="B9JVI2"/>
<dbReference type="STRING" id="311402.Avi_1760"/>
<dbReference type="KEGG" id="avi:Avi_1760"/>
<dbReference type="eggNOG" id="COG0344">
    <property type="taxonomic scope" value="Bacteria"/>
</dbReference>
<dbReference type="HOGENOM" id="CLU_081254_1_0_5"/>
<dbReference type="UniPathway" id="UPA00085"/>
<dbReference type="Proteomes" id="UP000001596">
    <property type="component" value="Chromosome 1"/>
</dbReference>
<dbReference type="GO" id="GO:0005886">
    <property type="term" value="C:plasma membrane"/>
    <property type="evidence" value="ECO:0007669"/>
    <property type="project" value="UniProtKB-SubCell"/>
</dbReference>
<dbReference type="GO" id="GO:0043772">
    <property type="term" value="F:acyl-phosphate glycerol-3-phosphate acyltransferase activity"/>
    <property type="evidence" value="ECO:0007669"/>
    <property type="project" value="UniProtKB-UniRule"/>
</dbReference>
<dbReference type="GO" id="GO:0008654">
    <property type="term" value="P:phospholipid biosynthetic process"/>
    <property type="evidence" value="ECO:0007669"/>
    <property type="project" value="UniProtKB-UniRule"/>
</dbReference>
<dbReference type="HAMAP" id="MF_01043">
    <property type="entry name" value="PlsY"/>
    <property type="match status" value="1"/>
</dbReference>
<dbReference type="InterPro" id="IPR003811">
    <property type="entry name" value="G3P_acylTferase_PlsY"/>
</dbReference>
<dbReference type="NCBIfam" id="TIGR00023">
    <property type="entry name" value="glycerol-3-phosphate 1-O-acyltransferase PlsY"/>
    <property type="match status" value="1"/>
</dbReference>
<dbReference type="PANTHER" id="PTHR30309:SF0">
    <property type="entry name" value="GLYCEROL-3-PHOSPHATE ACYLTRANSFERASE-RELATED"/>
    <property type="match status" value="1"/>
</dbReference>
<dbReference type="PANTHER" id="PTHR30309">
    <property type="entry name" value="INNER MEMBRANE PROTEIN YGIH"/>
    <property type="match status" value="1"/>
</dbReference>
<dbReference type="Pfam" id="PF02660">
    <property type="entry name" value="G3P_acyltransf"/>
    <property type="match status" value="1"/>
</dbReference>
<dbReference type="SMART" id="SM01207">
    <property type="entry name" value="G3P_acyltransf"/>
    <property type="match status" value="1"/>
</dbReference>
<proteinExistence type="inferred from homology"/>
<comment type="function">
    <text evidence="1">Catalyzes the transfer of an acyl group from acyl-phosphate (acyl-PO(4)) to glycerol-3-phosphate (G3P) to form lysophosphatidic acid (LPA). This enzyme utilizes acyl-phosphate as fatty acyl donor, but not acyl-CoA or acyl-ACP.</text>
</comment>
<comment type="catalytic activity">
    <reaction evidence="1">
        <text>an acyl phosphate + sn-glycerol 3-phosphate = a 1-acyl-sn-glycero-3-phosphate + phosphate</text>
        <dbReference type="Rhea" id="RHEA:34075"/>
        <dbReference type="ChEBI" id="CHEBI:43474"/>
        <dbReference type="ChEBI" id="CHEBI:57597"/>
        <dbReference type="ChEBI" id="CHEBI:57970"/>
        <dbReference type="ChEBI" id="CHEBI:59918"/>
        <dbReference type="EC" id="2.3.1.275"/>
    </reaction>
</comment>
<comment type="pathway">
    <text evidence="1">Lipid metabolism; phospholipid metabolism.</text>
</comment>
<comment type="subunit">
    <text evidence="1">Probably interacts with PlsX.</text>
</comment>
<comment type="subcellular location">
    <subcellularLocation>
        <location evidence="1">Cell inner membrane</location>
        <topology evidence="1">Multi-pass membrane protein</topology>
    </subcellularLocation>
</comment>
<comment type="similarity">
    <text evidence="1">Belongs to the PlsY family.</text>
</comment>